<organismHost>
    <name type="scientific">Homo sapiens</name>
    <name type="common">Human</name>
    <dbReference type="NCBI Taxonomy" id="9606"/>
</organismHost>
<name>VE6_HPV08</name>
<sequence>MDGQDKASYLDTNKDELPSTIKELAAALGIPLQDCSVPCNFCGNFLDFLELCEFDKKRLCLIWKNYVVTACCRCCCVATATFEFNEYYEQTVLGRDIELATGRSIFEIDVRCQNCLSFLDIIEKLDCCGRGRPFHKVRGGWKGVCRLCKHLYHDW</sequence>
<organism>
    <name type="scientific">Human papillomavirus type 8</name>
    <dbReference type="NCBI Taxonomy" id="10579"/>
    <lineage>
        <taxon>Viruses</taxon>
        <taxon>Monodnaviria</taxon>
        <taxon>Shotokuvirae</taxon>
        <taxon>Cossaviricota</taxon>
        <taxon>Papovaviricetes</taxon>
        <taxon>Zurhausenvirales</taxon>
        <taxon>Papillomaviridae</taxon>
        <taxon>Firstpapillomavirinae</taxon>
        <taxon>Betapapillomavirus</taxon>
        <taxon>Betapapillomavirus 1</taxon>
    </lineage>
</organism>
<reference key="1">
    <citation type="journal article" date="1986" name="J. Virol.">
        <title>Epidermodysplasia verruciformis-associated human papillomavirus 8: genomic sequence and comparative analysis.</title>
        <authorList>
            <person name="Fuchs P.G."/>
            <person name="Iftner T."/>
            <person name="Weninger J."/>
            <person name="Pfister H."/>
        </authorList>
    </citation>
    <scope>NUCLEOTIDE SEQUENCE [GENOMIC DNA]</scope>
</reference>
<dbReference type="EMBL" id="M12737">
    <property type="status" value="NOT_ANNOTATED_CDS"/>
    <property type="molecule type" value="Genomic_DNA"/>
</dbReference>
<dbReference type="PIR" id="A03685">
    <property type="entry name" value="W6WL8"/>
</dbReference>
<dbReference type="SMR" id="P06428"/>
<dbReference type="IntAct" id="P06428">
    <property type="interactions" value="133"/>
</dbReference>
<dbReference type="MINT" id="P06428"/>
<dbReference type="Proteomes" id="UP000009103">
    <property type="component" value="Segment"/>
</dbReference>
<dbReference type="GO" id="GO:0030430">
    <property type="term" value="C:host cell cytoplasm"/>
    <property type="evidence" value="ECO:0007669"/>
    <property type="project" value="UniProtKB-SubCell"/>
</dbReference>
<dbReference type="GO" id="GO:0042025">
    <property type="term" value="C:host cell nucleus"/>
    <property type="evidence" value="ECO:0007669"/>
    <property type="project" value="UniProtKB-SubCell"/>
</dbReference>
<dbReference type="GO" id="GO:0003677">
    <property type="term" value="F:DNA binding"/>
    <property type="evidence" value="ECO:0007669"/>
    <property type="project" value="UniProtKB-UniRule"/>
</dbReference>
<dbReference type="GO" id="GO:0008270">
    <property type="term" value="F:zinc ion binding"/>
    <property type="evidence" value="ECO:0007669"/>
    <property type="project" value="UniProtKB-KW"/>
</dbReference>
<dbReference type="GO" id="GO:0006351">
    <property type="term" value="P:DNA-templated transcription"/>
    <property type="evidence" value="ECO:0007669"/>
    <property type="project" value="UniProtKB-UniRule"/>
</dbReference>
<dbReference type="GO" id="GO:0006355">
    <property type="term" value="P:regulation of DNA-templated transcription"/>
    <property type="evidence" value="ECO:0007669"/>
    <property type="project" value="UniProtKB-UniRule"/>
</dbReference>
<dbReference type="GO" id="GO:0052150">
    <property type="term" value="P:symbiont-mediated perturbation of host apoptosis"/>
    <property type="evidence" value="ECO:0007669"/>
    <property type="project" value="UniProtKB-KW"/>
</dbReference>
<dbReference type="GO" id="GO:0039648">
    <property type="term" value="P:symbiont-mediated perturbation of host ubiquitin-like protein modification"/>
    <property type="evidence" value="ECO:0007669"/>
    <property type="project" value="UniProtKB-UniRule"/>
</dbReference>
<dbReference type="GO" id="GO:0052170">
    <property type="term" value="P:symbiont-mediated suppression of host innate immune response"/>
    <property type="evidence" value="ECO:0007669"/>
    <property type="project" value="UniProtKB-KW"/>
</dbReference>
<dbReference type="GO" id="GO:0039502">
    <property type="term" value="P:symbiont-mediated suppression of host type I interferon-mediated signaling pathway"/>
    <property type="evidence" value="ECO:0007669"/>
    <property type="project" value="UniProtKB-UniRule"/>
</dbReference>
<dbReference type="Gene3D" id="3.30.240.40">
    <property type="entry name" value="E6 early regulatory protein"/>
    <property type="match status" value="2"/>
</dbReference>
<dbReference type="HAMAP" id="MF_04006">
    <property type="entry name" value="HPV_E6"/>
    <property type="match status" value="1"/>
</dbReference>
<dbReference type="InterPro" id="IPR001334">
    <property type="entry name" value="E6"/>
</dbReference>
<dbReference type="InterPro" id="IPR038575">
    <property type="entry name" value="E6_sf"/>
</dbReference>
<dbReference type="Pfam" id="PF00518">
    <property type="entry name" value="E6"/>
    <property type="match status" value="1"/>
</dbReference>
<dbReference type="SUPFAM" id="SSF161229">
    <property type="entry name" value="E6 C-terminal domain-like"/>
    <property type="match status" value="2"/>
</dbReference>
<comment type="function">
    <text evidence="1">Plays a major role in the induction and maintenance of cellular transformation. E6 associates with host UBE3A/E6-AP ubiquitin-protein ligase and modulates its activity. Protects host keratinocytes from apoptosis by mediating the degradation of host BAK1. May also inhibit host immune response.</text>
</comment>
<comment type="subunit">
    <text evidence="1">Forms homodimers. Interacts with ubiquitin-protein ligase UBE3A/E6-AP; this interaction stimulates UBE3A ubiquitin activity. Interacts with host BAK1.</text>
</comment>
<comment type="subcellular location">
    <subcellularLocation>
        <location evidence="1">Host cytoplasm</location>
    </subcellularLocation>
    <subcellularLocation>
        <location evidence="1">Host nucleus</location>
    </subcellularLocation>
</comment>
<comment type="similarity">
    <text evidence="1 2">Belongs to the papillomaviridae E6 protein family.</text>
</comment>
<accession>P06428</accession>
<evidence type="ECO:0000255" key="1">
    <source>
        <dbReference type="HAMAP-Rule" id="MF_04006"/>
    </source>
</evidence>
<evidence type="ECO:0000305" key="2"/>
<gene>
    <name evidence="1" type="primary">E6</name>
</gene>
<keyword id="KW-0010">Activator</keyword>
<keyword id="KW-0238">DNA-binding</keyword>
<keyword id="KW-0244">Early protein</keyword>
<keyword id="KW-1035">Host cytoplasm</keyword>
<keyword id="KW-1048">Host nucleus</keyword>
<keyword id="KW-0945">Host-virus interaction</keyword>
<keyword id="KW-1090">Inhibition of host innate immune response by virus</keyword>
<keyword id="KW-0479">Metal-binding</keyword>
<keyword id="KW-1119">Modulation of host cell apoptosis by virus</keyword>
<keyword id="KW-0804">Transcription</keyword>
<keyword id="KW-0805">Transcription regulation</keyword>
<keyword id="KW-0899">Viral immunoevasion</keyword>
<keyword id="KW-0862">Zinc</keyword>
<keyword id="KW-0863">Zinc-finger</keyword>
<proteinExistence type="inferred from homology"/>
<feature type="chain" id="PRO_0000133328" description="Protein E6">
    <location>
        <begin position="1"/>
        <end position="155"/>
    </location>
</feature>
<feature type="zinc finger region" evidence="1">
    <location>
        <begin position="39"/>
        <end position="75"/>
    </location>
</feature>
<feature type="zinc finger region" evidence="1">
    <location>
        <begin position="112"/>
        <end position="148"/>
    </location>
</feature>
<protein>
    <recommendedName>
        <fullName evidence="1">Protein E6</fullName>
    </recommendedName>
</protein>